<gene>
    <name evidence="1" type="primary">nanA</name>
    <name type="ordered locus">ECH74115_4542</name>
</gene>
<evidence type="ECO:0000255" key="1">
    <source>
        <dbReference type="HAMAP-Rule" id="MF_01237"/>
    </source>
</evidence>
<name>NANA_ECO5E</name>
<protein>
    <recommendedName>
        <fullName evidence="1">N-acetylneuraminate lyase</fullName>
        <shortName evidence="1">NAL</shortName>
        <shortName evidence="1">Neu5Ac lyase</shortName>
        <ecNumber evidence="1">4.1.3.3</ecNumber>
    </recommendedName>
    <alternativeName>
        <fullName evidence="1">N-acetylneuraminate pyruvate-lyase</fullName>
    </alternativeName>
    <alternativeName>
        <fullName evidence="1">N-acetylneuraminic acid aldolase</fullName>
    </alternativeName>
    <alternativeName>
        <fullName evidence="1">Sialate lyase</fullName>
    </alternativeName>
    <alternativeName>
        <fullName evidence="1">Sialic acid aldolase</fullName>
    </alternativeName>
    <alternativeName>
        <fullName evidence="1">Sialic acid lyase</fullName>
    </alternativeName>
</protein>
<proteinExistence type="inferred from homology"/>
<comment type="function">
    <text evidence="1">Catalyzes the reversible aldol cleavage of N-acetylneuraminic acid (sialic acid; Neu5Ac) to form pyruvate and N-acetylmannosamine (ManNAc) via a Schiff base intermediate.</text>
</comment>
<comment type="catalytic activity">
    <reaction evidence="1">
        <text>aceneuramate = aldehydo-N-acetyl-D-mannosamine + pyruvate</text>
        <dbReference type="Rhea" id="RHEA:23296"/>
        <dbReference type="ChEBI" id="CHEBI:15361"/>
        <dbReference type="ChEBI" id="CHEBI:17122"/>
        <dbReference type="ChEBI" id="CHEBI:173083"/>
        <dbReference type="EC" id="4.1.3.3"/>
    </reaction>
</comment>
<comment type="pathway">
    <text evidence="1">Amino-sugar metabolism; N-acetylneuraminate degradation; D-fructose 6-phosphate from N-acetylneuraminate: step 1/5.</text>
</comment>
<comment type="subunit">
    <text evidence="1">Homotetramer.</text>
</comment>
<comment type="subcellular location">
    <subcellularLocation>
        <location evidence="1">Cytoplasm</location>
    </subcellularLocation>
</comment>
<comment type="similarity">
    <text evidence="1">Belongs to the DapA family. NanA subfamily.</text>
</comment>
<accession>B5YSV2</accession>
<keyword id="KW-0119">Carbohydrate metabolism</keyword>
<keyword id="KW-0963">Cytoplasm</keyword>
<keyword id="KW-0456">Lyase</keyword>
<keyword id="KW-0704">Schiff base</keyword>
<dbReference type="EC" id="4.1.3.3" evidence="1"/>
<dbReference type="EMBL" id="CP001164">
    <property type="protein sequence ID" value="ACI37043.1"/>
    <property type="molecule type" value="Genomic_DNA"/>
</dbReference>
<dbReference type="RefSeq" id="WP_000224714.1">
    <property type="nucleotide sequence ID" value="NC_011353.1"/>
</dbReference>
<dbReference type="SMR" id="B5YSV2"/>
<dbReference type="GeneID" id="93778761"/>
<dbReference type="KEGG" id="ecf:ECH74115_4542"/>
<dbReference type="HOGENOM" id="CLU_049343_6_0_6"/>
<dbReference type="UniPathway" id="UPA00629">
    <property type="reaction ID" value="UER00680"/>
</dbReference>
<dbReference type="GO" id="GO:0005829">
    <property type="term" value="C:cytosol"/>
    <property type="evidence" value="ECO:0007669"/>
    <property type="project" value="TreeGrafter"/>
</dbReference>
<dbReference type="GO" id="GO:0008747">
    <property type="term" value="F:N-acetylneuraminate lyase activity"/>
    <property type="evidence" value="ECO:0007669"/>
    <property type="project" value="UniProtKB-UniRule"/>
</dbReference>
<dbReference type="GO" id="GO:0005975">
    <property type="term" value="P:carbohydrate metabolic process"/>
    <property type="evidence" value="ECO:0007669"/>
    <property type="project" value="UniProtKB-UniRule"/>
</dbReference>
<dbReference type="GO" id="GO:0019262">
    <property type="term" value="P:N-acetylneuraminate catabolic process"/>
    <property type="evidence" value="ECO:0007669"/>
    <property type="project" value="UniProtKB-UniRule"/>
</dbReference>
<dbReference type="CDD" id="cd00954">
    <property type="entry name" value="NAL"/>
    <property type="match status" value="1"/>
</dbReference>
<dbReference type="FunFam" id="3.20.20.70:FF:000039">
    <property type="entry name" value="N-acetylneuraminate lyase"/>
    <property type="match status" value="1"/>
</dbReference>
<dbReference type="Gene3D" id="3.20.20.70">
    <property type="entry name" value="Aldolase class I"/>
    <property type="match status" value="1"/>
</dbReference>
<dbReference type="HAMAP" id="MF_01237">
    <property type="entry name" value="N_acetylneuram_lyase"/>
    <property type="match status" value="1"/>
</dbReference>
<dbReference type="InterPro" id="IPR013785">
    <property type="entry name" value="Aldolase_TIM"/>
</dbReference>
<dbReference type="InterPro" id="IPR002220">
    <property type="entry name" value="DapA-like"/>
</dbReference>
<dbReference type="InterPro" id="IPR005264">
    <property type="entry name" value="NanA"/>
</dbReference>
<dbReference type="InterPro" id="IPR020625">
    <property type="entry name" value="Schiff_base-form_aldolases_AS"/>
</dbReference>
<dbReference type="InterPro" id="IPR020624">
    <property type="entry name" value="Schiff_base-form_aldolases_CS"/>
</dbReference>
<dbReference type="NCBIfam" id="TIGR00683">
    <property type="entry name" value="nanA"/>
    <property type="match status" value="1"/>
</dbReference>
<dbReference type="NCBIfam" id="NF003164">
    <property type="entry name" value="PRK04147.1"/>
    <property type="match status" value="1"/>
</dbReference>
<dbReference type="PANTHER" id="PTHR42849">
    <property type="entry name" value="N-ACETYLNEURAMINATE LYASE"/>
    <property type="match status" value="1"/>
</dbReference>
<dbReference type="PANTHER" id="PTHR42849:SF1">
    <property type="entry name" value="N-ACETYLNEURAMINATE LYASE"/>
    <property type="match status" value="1"/>
</dbReference>
<dbReference type="Pfam" id="PF00701">
    <property type="entry name" value="DHDPS"/>
    <property type="match status" value="1"/>
</dbReference>
<dbReference type="PIRSF" id="PIRSF001365">
    <property type="entry name" value="DHDPS"/>
    <property type="match status" value="1"/>
</dbReference>
<dbReference type="PRINTS" id="PR00146">
    <property type="entry name" value="DHPICSNTHASE"/>
</dbReference>
<dbReference type="SMART" id="SM01130">
    <property type="entry name" value="DHDPS"/>
    <property type="match status" value="1"/>
</dbReference>
<dbReference type="SUPFAM" id="SSF51569">
    <property type="entry name" value="Aldolase"/>
    <property type="match status" value="1"/>
</dbReference>
<dbReference type="PROSITE" id="PS00665">
    <property type="entry name" value="DHDPS_1"/>
    <property type="match status" value="1"/>
</dbReference>
<dbReference type="PROSITE" id="PS00666">
    <property type="entry name" value="DHDPS_2"/>
    <property type="match status" value="1"/>
</dbReference>
<feature type="chain" id="PRO_1000139731" description="N-acetylneuraminate lyase">
    <location>
        <begin position="1"/>
        <end position="297"/>
    </location>
</feature>
<feature type="active site" description="Proton donor" evidence="1">
    <location>
        <position position="137"/>
    </location>
</feature>
<feature type="active site" description="Schiff-base intermediate with substrate" evidence="1">
    <location>
        <position position="165"/>
    </location>
</feature>
<feature type="binding site" evidence="1">
    <location>
        <position position="47"/>
    </location>
    <ligand>
        <name>aceneuramate</name>
        <dbReference type="ChEBI" id="CHEBI:173083"/>
    </ligand>
</feature>
<feature type="binding site" evidence="1">
    <location>
        <position position="48"/>
    </location>
    <ligand>
        <name>aceneuramate</name>
        <dbReference type="ChEBI" id="CHEBI:173083"/>
    </ligand>
</feature>
<feature type="binding site" evidence="1">
    <location>
        <position position="167"/>
    </location>
    <ligand>
        <name>aceneuramate</name>
        <dbReference type="ChEBI" id="CHEBI:173083"/>
    </ligand>
</feature>
<feature type="binding site" evidence="1">
    <location>
        <position position="189"/>
    </location>
    <ligand>
        <name>aceneuramate</name>
        <dbReference type="ChEBI" id="CHEBI:173083"/>
    </ligand>
</feature>
<feature type="binding site" evidence="1">
    <location>
        <position position="191"/>
    </location>
    <ligand>
        <name>aceneuramate</name>
        <dbReference type="ChEBI" id="CHEBI:173083"/>
    </ligand>
</feature>
<feature type="binding site" evidence="1">
    <location>
        <position position="192"/>
    </location>
    <ligand>
        <name>aceneuramate</name>
        <dbReference type="ChEBI" id="CHEBI:173083"/>
    </ligand>
</feature>
<feature type="binding site" evidence="1">
    <location>
        <position position="208"/>
    </location>
    <ligand>
        <name>aceneuramate</name>
        <dbReference type="ChEBI" id="CHEBI:173083"/>
    </ligand>
</feature>
<organism>
    <name type="scientific">Escherichia coli O157:H7 (strain EC4115 / EHEC)</name>
    <dbReference type="NCBI Taxonomy" id="444450"/>
    <lineage>
        <taxon>Bacteria</taxon>
        <taxon>Pseudomonadati</taxon>
        <taxon>Pseudomonadota</taxon>
        <taxon>Gammaproteobacteria</taxon>
        <taxon>Enterobacterales</taxon>
        <taxon>Enterobacteriaceae</taxon>
        <taxon>Escherichia</taxon>
    </lineage>
</organism>
<reference key="1">
    <citation type="journal article" date="2011" name="Proc. Natl. Acad. Sci. U.S.A.">
        <title>Genomic anatomy of Escherichia coli O157:H7 outbreaks.</title>
        <authorList>
            <person name="Eppinger M."/>
            <person name="Mammel M.K."/>
            <person name="Leclerc J.E."/>
            <person name="Ravel J."/>
            <person name="Cebula T.A."/>
        </authorList>
    </citation>
    <scope>NUCLEOTIDE SEQUENCE [LARGE SCALE GENOMIC DNA]</scope>
    <source>
        <strain>EC4115 / EHEC</strain>
    </source>
</reference>
<sequence length="297" mass="32593">MATNLRGVMAALLTPFDQQQALDKASLRRLVQFNIQQGIDGLYVGGSTGEAFVQSLSEREQVLEIVAEEAKGKIKLIAHVGCVSTAESQQLAASAKRYGFDAVSAVTPFYYPFSFEEHCDHYRAIIDSADGLPMVVYNIPALSGVKLTLDQINTLVTLPGVGALKQTSGDLYQMEQIRREHPDLVLYNGYDEIFASGLLAGADGGIGSTYNIMGWRYQGIVKALKEGDIQTAQKLQTECNKVIDLLIKTGVFRGLKTVLHYMDVVSVPLCRKPFGPVDEKYLPELKALAQQLMQERG</sequence>